<organism>
    <name type="scientific">Physcomitrium patens</name>
    <name type="common">Spreading-leaved earth moss</name>
    <name type="synonym">Physcomitrella patens</name>
    <dbReference type="NCBI Taxonomy" id="3218"/>
    <lineage>
        <taxon>Eukaryota</taxon>
        <taxon>Viridiplantae</taxon>
        <taxon>Streptophyta</taxon>
        <taxon>Embryophyta</taxon>
        <taxon>Bryophyta</taxon>
        <taxon>Bryophytina</taxon>
        <taxon>Bryopsida</taxon>
        <taxon>Funariidae</taxon>
        <taxon>Funariales</taxon>
        <taxon>Funariaceae</taxon>
        <taxon>Physcomitrium</taxon>
    </lineage>
</organism>
<protein>
    <recommendedName>
        <fullName evidence="1">Large ribosomal subunit protein bL33c</fullName>
    </recommendedName>
    <alternativeName>
        <fullName evidence="2">50S ribosomal protein L33, chloroplastic</fullName>
    </alternativeName>
</protein>
<gene>
    <name evidence="1" type="primary">rpl33</name>
</gene>
<dbReference type="EMBL" id="AP005672">
    <property type="protein sequence ID" value="BAC85029.1"/>
    <property type="molecule type" value="Genomic_DNA"/>
</dbReference>
<dbReference type="RefSeq" id="NP_904179.1">
    <property type="nucleotide sequence ID" value="NC_005087.2"/>
</dbReference>
<dbReference type="RefSeq" id="YP_009477510.1">
    <property type="nucleotide sequence ID" value="NC_037465.1"/>
</dbReference>
<dbReference type="FunCoup" id="Q6YXM3">
    <property type="interactions" value="53"/>
</dbReference>
<dbReference type="STRING" id="3218.Q6YXM3"/>
<dbReference type="GeneID" id="2546714"/>
<dbReference type="GeneID" id="36487122"/>
<dbReference type="KEGG" id="ppp:2546714"/>
<dbReference type="InParanoid" id="Q6YXM3"/>
<dbReference type="OrthoDB" id="361870at2759"/>
<dbReference type="Proteomes" id="UP000006727">
    <property type="component" value="Chloroplast"/>
</dbReference>
<dbReference type="GO" id="GO:0009507">
    <property type="term" value="C:chloroplast"/>
    <property type="evidence" value="ECO:0007669"/>
    <property type="project" value="UniProtKB-SubCell"/>
</dbReference>
<dbReference type="GO" id="GO:1990904">
    <property type="term" value="C:ribonucleoprotein complex"/>
    <property type="evidence" value="ECO:0007669"/>
    <property type="project" value="UniProtKB-KW"/>
</dbReference>
<dbReference type="GO" id="GO:0005840">
    <property type="term" value="C:ribosome"/>
    <property type="evidence" value="ECO:0007669"/>
    <property type="project" value="UniProtKB-KW"/>
</dbReference>
<dbReference type="GO" id="GO:0003735">
    <property type="term" value="F:structural constituent of ribosome"/>
    <property type="evidence" value="ECO:0007669"/>
    <property type="project" value="InterPro"/>
</dbReference>
<dbReference type="GO" id="GO:0006412">
    <property type="term" value="P:translation"/>
    <property type="evidence" value="ECO:0007669"/>
    <property type="project" value="UniProtKB-UniRule"/>
</dbReference>
<dbReference type="Gene3D" id="2.20.28.120">
    <property type="entry name" value="Ribosomal protein L33"/>
    <property type="match status" value="1"/>
</dbReference>
<dbReference type="HAMAP" id="MF_00294">
    <property type="entry name" value="Ribosomal_bL33"/>
    <property type="match status" value="1"/>
</dbReference>
<dbReference type="InterPro" id="IPR001705">
    <property type="entry name" value="Ribosomal_bL33"/>
</dbReference>
<dbReference type="InterPro" id="IPR018264">
    <property type="entry name" value="Ribosomal_bL33_CS"/>
</dbReference>
<dbReference type="InterPro" id="IPR038584">
    <property type="entry name" value="Ribosomal_bL33_sf"/>
</dbReference>
<dbReference type="InterPro" id="IPR011332">
    <property type="entry name" value="Ribosomal_zn-bd"/>
</dbReference>
<dbReference type="NCBIfam" id="NF001764">
    <property type="entry name" value="PRK00504.1"/>
    <property type="match status" value="1"/>
</dbReference>
<dbReference type="NCBIfam" id="NF001860">
    <property type="entry name" value="PRK00595.1"/>
    <property type="match status" value="1"/>
</dbReference>
<dbReference type="NCBIfam" id="TIGR01023">
    <property type="entry name" value="rpmG_bact"/>
    <property type="match status" value="1"/>
</dbReference>
<dbReference type="PANTHER" id="PTHR43168">
    <property type="entry name" value="50S RIBOSOMAL PROTEIN L33, CHLOROPLASTIC"/>
    <property type="match status" value="1"/>
</dbReference>
<dbReference type="PANTHER" id="PTHR43168:SF2">
    <property type="entry name" value="LARGE RIBOSOMAL SUBUNIT PROTEIN BL33C"/>
    <property type="match status" value="1"/>
</dbReference>
<dbReference type="Pfam" id="PF00471">
    <property type="entry name" value="Ribosomal_L33"/>
    <property type="match status" value="1"/>
</dbReference>
<dbReference type="SUPFAM" id="SSF57829">
    <property type="entry name" value="Zn-binding ribosomal proteins"/>
    <property type="match status" value="1"/>
</dbReference>
<dbReference type="PROSITE" id="PS00582">
    <property type="entry name" value="RIBOSOMAL_L33"/>
    <property type="match status" value="1"/>
</dbReference>
<name>RK33_PHYPA</name>
<geneLocation type="chloroplast"/>
<comment type="subcellular location">
    <subcellularLocation>
        <location>Plastid</location>
        <location>Chloroplast</location>
    </subcellularLocation>
</comment>
<comment type="similarity">
    <text evidence="1">Belongs to the bacterial ribosomal protein bL33 family.</text>
</comment>
<sequence>MAKNKDVRVTITLECTNNCAQNNEKKKLGVSRYTTQKNRRNTPTRLELKKFCSYCNKHTIHKEIKK</sequence>
<feature type="chain" id="PRO_0000170296" description="Large ribosomal subunit protein bL33c">
    <location>
        <begin position="1"/>
        <end position="66"/>
    </location>
</feature>
<proteinExistence type="inferred from homology"/>
<reference key="1">
    <citation type="journal article" date="2003" name="Nucleic Acids Res.">
        <title>Complete chloroplast DNA sequence of the moss Physcomitrella patens: evidence for the loss and relocation of rpoA from the chloroplast to the nucleus.</title>
        <authorList>
            <person name="Sugiura C."/>
            <person name="Kobayashi Y."/>
            <person name="Setsuyuki A."/>
            <person name="Sugita C."/>
            <person name="Sugita M."/>
        </authorList>
    </citation>
    <scope>NUCLEOTIDE SEQUENCE [LARGE SCALE GENOMIC DNA]</scope>
    <source>
        <strain>cv. Gransden 2004</strain>
    </source>
</reference>
<accession>Q6YXM3</accession>
<keyword id="KW-0150">Chloroplast</keyword>
<keyword id="KW-0934">Plastid</keyword>
<keyword id="KW-1185">Reference proteome</keyword>
<keyword id="KW-0687">Ribonucleoprotein</keyword>
<keyword id="KW-0689">Ribosomal protein</keyword>
<evidence type="ECO:0000255" key="1">
    <source>
        <dbReference type="HAMAP-Rule" id="MF_00294"/>
    </source>
</evidence>
<evidence type="ECO:0000305" key="2"/>